<comment type="function">
    <text evidence="1">Single strand-specific metallo-endoribonuclease involved in late-stage 70S ribosome quality control and in maturation of the 3' terminus of the 16S rRNA.</text>
</comment>
<comment type="cofactor">
    <cofactor evidence="1">
        <name>Zn(2+)</name>
        <dbReference type="ChEBI" id="CHEBI:29105"/>
    </cofactor>
    <text evidence="1">Binds 1 zinc ion.</text>
</comment>
<comment type="subcellular location">
    <subcellularLocation>
        <location evidence="1">Cytoplasm</location>
    </subcellularLocation>
</comment>
<comment type="similarity">
    <text evidence="1">Belongs to the endoribonuclease YbeY family.</text>
</comment>
<comment type="sequence caution" evidence="2">
    <conflict type="erroneous initiation">
        <sequence resource="EMBL-CDS" id="AAX71488"/>
    </conflict>
</comment>
<accession>Q48UW8</accession>
<proteinExistence type="inferred from homology"/>
<dbReference type="EC" id="3.1.-.-" evidence="1"/>
<dbReference type="EMBL" id="CP000056">
    <property type="protein sequence ID" value="AAX71488.1"/>
    <property type="status" value="ALT_INIT"/>
    <property type="molecule type" value="Genomic_DNA"/>
</dbReference>
<dbReference type="RefSeq" id="WP_021340735.1">
    <property type="nucleotide sequence ID" value="NC_007296.2"/>
</dbReference>
<dbReference type="SMR" id="Q48UW8"/>
<dbReference type="KEGG" id="spb:M28_Spy0374"/>
<dbReference type="HOGENOM" id="CLU_106710_3_0_9"/>
<dbReference type="GO" id="GO:0005737">
    <property type="term" value="C:cytoplasm"/>
    <property type="evidence" value="ECO:0007669"/>
    <property type="project" value="UniProtKB-SubCell"/>
</dbReference>
<dbReference type="GO" id="GO:0004222">
    <property type="term" value="F:metalloendopeptidase activity"/>
    <property type="evidence" value="ECO:0007669"/>
    <property type="project" value="InterPro"/>
</dbReference>
<dbReference type="GO" id="GO:0004521">
    <property type="term" value="F:RNA endonuclease activity"/>
    <property type="evidence" value="ECO:0007669"/>
    <property type="project" value="UniProtKB-UniRule"/>
</dbReference>
<dbReference type="GO" id="GO:0008270">
    <property type="term" value="F:zinc ion binding"/>
    <property type="evidence" value="ECO:0007669"/>
    <property type="project" value="UniProtKB-UniRule"/>
</dbReference>
<dbReference type="GO" id="GO:0006364">
    <property type="term" value="P:rRNA processing"/>
    <property type="evidence" value="ECO:0007669"/>
    <property type="project" value="UniProtKB-UniRule"/>
</dbReference>
<dbReference type="Gene3D" id="3.40.390.30">
    <property type="entry name" value="Metalloproteases ('zincins'), catalytic domain"/>
    <property type="match status" value="1"/>
</dbReference>
<dbReference type="HAMAP" id="MF_00009">
    <property type="entry name" value="Endoribonucl_YbeY"/>
    <property type="match status" value="1"/>
</dbReference>
<dbReference type="InterPro" id="IPR023091">
    <property type="entry name" value="MetalPrtase_cat_dom_sf_prd"/>
</dbReference>
<dbReference type="InterPro" id="IPR002036">
    <property type="entry name" value="YbeY"/>
</dbReference>
<dbReference type="InterPro" id="IPR020549">
    <property type="entry name" value="YbeY_CS"/>
</dbReference>
<dbReference type="NCBIfam" id="TIGR00043">
    <property type="entry name" value="rRNA maturation RNase YbeY"/>
    <property type="match status" value="1"/>
</dbReference>
<dbReference type="PANTHER" id="PTHR46986">
    <property type="entry name" value="ENDORIBONUCLEASE YBEY, CHLOROPLASTIC"/>
    <property type="match status" value="1"/>
</dbReference>
<dbReference type="PANTHER" id="PTHR46986:SF1">
    <property type="entry name" value="ENDORIBONUCLEASE YBEY, CHLOROPLASTIC"/>
    <property type="match status" value="1"/>
</dbReference>
<dbReference type="Pfam" id="PF02130">
    <property type="entry name" value="YbeY"/>
    <property type="match status" value="1"/>
</dbReference>
<dbReference type="SUPFAM" id="SSF55486">
    <property type="entry name" value="Metalloproteases ('zincins'), catalytic domain"/>
    <property type="match status" value="1"/>
</dbReference>
<dbReference type="PROSITE" id="PS01306">
    <property type="entry name" value="UPF0054"/>
    <property type="match status" value="1"/>
</dbReference>
<name>YBEY_STRPM</name>
<keyword id="KW-0963">Cytoplasm</keyword>
<keyword id="KW-0255">Endonuclease</keyword>
<keyword id="KW-0378">Hydrolase</keyword>
<keyword id="KW-0479">Metal-binding</keyword>
<keyword id="KW-0540">Nuclease</keyword>
<keyword id="KW-0690">Ribosome biogenesis</keyword>
<keyword id="KW-0698">rRNA processing</keyword>
<keyword id="KW-0862">Zinc</keyword>
<organism>
    <name type="scientific">Streptococcus pyogenes serotype M28 (strain MGAS6180)</name>
    <dbReference type="NCBI Taxonomy" id="319701"/>
    <lineage>
        <taxon>Bacteria</taxon>
        <taxon>Bacillati</taxon>
        <taxon>Bacillota</taxon>
        <taxon>Bacilli</taxon>
        <taxon>Lactobacillales</taxon>
        <taxon>Streptococcaceae</taxon>
        <taxon>Streptococcus</taxon>
    </lineage>
</organism>
<feature type="chain" id="PRO_0000284329" description="Endoribonuclease YbeY">
    <location>
        <begin position="1"/>
        <end position="165"/>
    </location>
</feature>
<feature type="binding site" evidence="1">
    <location>
        <position position="130"/>
    </location>
    <ligand>
        <name>Zn(2+)</name>
        <dbReference type="ChEBI" id="CHEBI:29105"/>
        <note>catalytic</note>
    </ligand>
</feature>
<feature type="binding site" evidence="1">
    <location>
        <position position="134"/>
    </location>
    <ligand>
        <name>Zn(2+)</name>
        <dbReference type="ChEBI" id="CHEBI:29105"/>
        <note>catalytic</note>
    </ligand>
</feature>
<feature type="binding site" evidence="1">
    <location>
        <position position="140"/>
    </location>
    <ligand>
        <name>Zn(2+)</name>
        <dbReference type="ChEBI" id="CHEBI:29105"/>
        <note>catalytic</note>
    </ligand>
</feature>
<reference key="1">
    <citation type="journal article" date="2005" name="J. Infect. Dis.">
        <title>Genome sequence of a serotype M28 strain of group A Streptococcus: potential new insights into puerperal sepsis and bacterial disease specificity.</title>
        <authorList>
            <person name="Green N.M."/>
            <person name="Zhang S."/>
            <person name="Porcella S.F."/>
            <person name="Nagiec M.J."/>
            <person name="Barbian K.D."/>
            <person name="Beres S.B."/>
            <person name="Lefebvre R.B."/>
            <person name="Musser J.M."/>
        </authorList>
    </citation>
    <scope>NUCLEOTIDE SEQUENCE [LARGE SCALE GENOMIC DNA]</scope>
    <source>
        <strain>MGAS6180</strain>
    </source>
</reference>
<gene>
    <name evidence="1" type="primary">ybeY</name>
    <name type="ordered locus">M28_Spy0374</name>
</gene>
<sequence>MYIEMIDETGQVSQEIMEQTLDLLNFAAQKTGKEEKEMSVTFVTNERSHELNLEYRDTDRPTDVISLEYKPETPILFSQEDFAADPSLAEMMAEFDAYIGELFISIDKAREQSQEYGHSFEREMGFLAVHGFLHINGYDHYTLEEEKEMFTLQEEILTAYGLTRQ</sequence>
<protein>
    <recommendedName>
        <fullName evidence="1">Endoribonuclease YbeY</fullName>
        <ecNumber evidence="1">3.1.-.-</ecNumber>
    </recommendedName>
</protein>
<evidence type="ECO:0000255" key="1">
    <source>
        <dbReference type="HAMAP-Rule" id="MF_00009"/>
    </source>
</evidence>
<evidence type="ECO:0000305" key="2"/>